<organism>
    <name type="scientific">Rhodospirillum centenum (strain ATCC 51521 / SW)</name>
    <dbReference type="NCBI Taxonomy" id="414684"/>
    <lineage>
        <taxon>Bacteria</taxon>
        <taxon>Pseudomonadati</taxon>
        <taxon>Pseudomonadota</taxon>
        <taxon>Alphaproteobacteria</taxon>
        <taxon>Rhodospirillales</taxon>
        <taxon>Rhodospirillaceae</taxon>
        <taxon>Rhodospirillum</taxon>
    </lineage>
</organism>
<accession>B6IXD8</accession>
<keyword id="KW-0067">ATP-binding</keyword>
<keyword id="KW-0418">Kinase</keyword>
<keyword id="KW-0441">Lipid A biosynthesis</keyword>
<keyword id="KW-0444">Lipid biosynthesis</keyword>
<keyword id="KW-0443">Lipid metabolism</keyword>
<keyword id="KW-0547">Nucleotide-binding</keyword>
<keyword id="KW-1185">Reference proteome</keyword>
<keyword id="KW-0808">Transferase</keyword>
<sequence>MKAPAFWYAPPGTARPLLSALLTPAALAWTAATRRRLSGTRPWHAPVPVICVGNLVAGGAGKTPVVLDLLSRLRRGGLDAHALSRGHGGRLPGPLRVDPARHTAAEVGDEPLLLAAAAPAWIARDRAAGARAAADAGAGVLVLDDGFQNPGIAKDLSLLVVDGDAGFGNGRVIPAGPLREPVADGLARAQAVLLLGEDRRGTADLCRGRLPVLRGRLVPDPQAAADLEGRRVLAFAGIGRPEKLFRTLEALGADVVARLPFPDHHPFTAAELRALLDRAAALDALPVTTQKDLVRLPAELRGQVRALPVSIAWEEPDTLDRLLAPLLSGKDDHGQAQ</sequence>
<reference key="1">
    <citation type="submission" date="2007-03" db="EMBL/GenBank/DDBJ databases">
        <title>Genome sequence of Rhodospirillum centenum.</title>
        <authorList>
            <person name="Touchman J.W."/>
            <person name="Bauer C."/>
            <person name="Blankenship R.E."/>
        </authorList>
    </citation>
    <scope>NUCLEOTIDE SEQUENCE [LARGE SCALE GENOMIC DNA]</scope>
    <source>
        <strain>ATCC 51521 / SW</strain>
    </source>
</reference>
<dbReference type="EC" id="2.7.1.130" evidence="1"/>
<dbReference type="EMBL" id="CP000613">
    <property type="protein sequence ID" value="ACJ00962.1"/>
    <property type="molecule type" value="Genomic_DNA"/>
</dbReference>
<dbReference type="RefSeq" id="WP_012568738.1">
    <property type="nucleotide sequence ID" value="NC_011420.2"/>
</dbReference>
<dbReference type="SMR" id="B6IXD8"/>
<dbReference type="STRING" id="414684.RC1_3613"/>
<dbReference type="KEGG" id="rce:RC1_3613"/>
<dbReference type="eggNOG" id="COG1663">
    <property type="taxonomic scope" value="Bacteria"/>
</dbReference>
<dbReference type="HOGENOM" id="CLU_038816_0_0_5"/>
<dbReference type="OrthoDB" id="9766423at2"/>
<dbReference type="UniPathway" id="UPA00359">
    <property type="reaction ID" value="UER00482"/>
</dbReference>
<dbReference type="Proteomes" id="UP000001591">
    <property type="component" value="Chromosome"/>
</dbReference>
<dbReference type="GO" id="GO:0005886">
    <property type="term" value="C:plasma membrane"/>
    <property type="evidence" value="ECO:0007669"/>
    <property type="project" value="TreeGrafter"/>
</dbReference>
<dbReference type="GO" id="GO:0005524">
    <property type="term" value="F:ATP binding"/>
    <property type="evidence" value="ECO:0007669"/>
    <property type="project" value="UniProtKB-UniRule"/>
</dbReference>
<dbReference type="GO" id="GO:0009029">
    <property type="term" value="F:tetraacyldisaccharide 4'-kinase activity"/>
    <property type="evidence" value="ECO:0007669"/>
    <property type="project" value="UniProtKB-UniRule"/>
</dbReference>
<dbReference type="GO" id="GO:0009245">
    <property type="term" value="P:lipid A biosynthetic process"/>
    <property type="evidence" value="ECO:0007669"/>
    <property type="project" value="UniProtKB-UniRule"/>
</dbReference>
<dbReference type="GO" id="GO:0009244">
    <property type="term" value="P:lipopolysaccharide core region biosynthetic process"/>
    <property type="evidence" value="ECO:0007669"/>
    <property type="project" value="TreeGrafter"/>
</dbReference>
<dbReference type="HAMAP" id="MF_00409">
    <property type="entry name" value="LpxK"/>
    <property type="match status" value="1"/>
</dbReference>
<dbReference type="InterPro" id="IPR003758">
    <property type="entry name" value="LpxK"/>
</dbReference>
<dbReference type="InterPro" id="IPR027417">
    <property type="entry name" value="P-loop_NTPase"/>
</dbReference>
<dbReference type="NCBIfam" id="TIGR00682">
    <property type="entry name" value="lpxK"/>
    <property type="match status" value="1"/>
</dbReference>
<dbReference type="PANTHER" id="PTHR42724">
    <property type="entry name" value="TETRAACYLDISACCHARIDE 4'-KINASE"/>
    <property type="match status" value="1"/>
</dbReference>
<dbReference type="PANTHER" id="PTHR42724:SF1">
    <property type="entry name" value="TETRAACYLDISACCHARIDE 4'-KINASE, MITOCHONDRIAL-RELATED"/>
    <property type="match status" value="1"/>
</dbReference>
<dbReference type="Pfam" id="PF02606">
    <property type="entry name" value="LpxK"/>
    <property type="match status" value="1"/>
</dbReference>
<dbReference type="SUPFAM" id="SSF52540">
    <property type="entry name" value="P-loop containing nucleoside triphosphate hydrolases"/>
    <property type="match status" value="1"/>
</dbReference>
<proteinExistence type="inferred from homology"/>
<protein>
    <recommendedName>
        <fullName evidence="1">Tetraacyldisaccharide 4'-kinase</fullName>
        <ecNumber evidence="1">2.7.1.130</ecNumber>
    </recommendedName>
    <alternativeName>
        <fullName evidence="1">Lipid A 4'-kinase</fullName>
    </alternativeName>
</protein>
<name>LPXK_RHOCS</name>
<gene>
    <name evidence="1" type="primary">lpxK</name>
    <name type="ordered locus">RC1_3613</name>
</gene>
<comment type="function">
    <text evidence="1">Transfers the gamma-phosphate of ATP to the 4'-position of a tetraacyldisaccharide 1-phosphate intermediate (termed DS-1-P) to form tetraacyldisaccharide 1,4'-bis-phosphate (lipid IVA).</text>
</comment>
<comment type="catalytic activity">
    <reaction evidence="1">
        <text>a lipid A disaccharide + ATP = a lipid IVA + ADP + H(+)</text>
        <dbReference type="Rhea" id="RHEA:67840"/>
        <dbReference type="ChEBI" id="CHEBI:15378"/>
        <dbReference type="ChEBI" id="CHEBI:30616"/>
        <dbReference type="ChEBI" id="CHEBI:176343"/>
        <dbReference type="ChEBI" id="CHEBI:176425"/>
        <dbReference type="ChEBI" id="CHEBI:456216"/>
        <dbReference type="EC" id="2.7.1.130"/>
    </reaction>
</comment>
<comment type="pathway">
    <text evidence="1">Glycolipid biosynthesis; lipid IV(A) biosynthesis; lipid IV(A) from (3R)-3-hydroxytetradecanoyl-[acyl-carrier-protein] and UDP-N-acetyl-alpha-D-glucosamine: step 6/6.</text>
</comment>
<comment type="similarity">
    <text evidence="1">Belongs to the LpxK family.</text>
</comment>
<evidence type="ECO:0000255" key="1">
    <source>
        <dbReference type="HAMAP-Rule" id="MF_00409"/>
    </source>
</evidence>
<feature type="chain" id="PRO_1000123733" description="Tetraacyldisaccharide 4'-kinase">
    <location>
        <begin position="1"/>
        <end position="337"/>
    </location>
</feature>
<feature type="binding site" evidence="1">
    <location>
        <begin position="56"/>
        <end position="63"/>
    </location>
    <ligand>
        <name>ATP</name>
        <dbReference type="ChEBI" id="CHEBI:30616"/>
    </ligand>
</feature>